<proteinExistence type="inferred from homology"/>
<reference key="1">
    <citation type="journal article" date="2005" name="Proc. Natl. Acad. Sci. U.S.A.">
        <title>Whole genome sequence of Staphylococcus saprophyticus reveals the pathogenesis of uncomplicated urinary tract infection.</title>
        <authorList>
            <person name="Kuroda M."/>
            <person name="Yamashita A."/>
            <person name="Hirakawa H."/>
            <person name="Kumano M."/>
            <person name="Morikawa K."/>
            <person name="Higashide M."/>
            <person name="Maruyama A."/>
            <person name="Inose Y."/>
            <person name="Matoba K."/>
            <person name="Toh H."/>
            <person name="Kuhara S."/>
            <person name="Hattori M."/>
            <person name="Ohta T."/>
        </authorList>
    </citation>
    <scope>NUCLEOTIDE SEQUENCE [LARGE SCALE GENOMIC DNA]</scope>
    <source>
        <strain>ATCC 15305 / DSM 20229 / NCIMB 8711 / NCTC 7292 / S-41</strain>
    </source>
</reference>
<protein>
    <recommendedName>
        <fullName evidence="1">Thiazole synthase</fullName>
        <ecNumber evidence="1">2.8.1.10</ecNumber>
    </recommendedName>
</protein>
<geneLocation type="plasmid">
    <name>pSSP1</name>
</geneLocation>
<organism>
    <name type="scientific">Staphylococcus saprophyticus subsp. saprophyticus (strain ATCC 15305 / DSM 20229 / NCIMB 8711 / NCTC 7292 / S-41)</name>
    <dbReference type="NCBI Taxonomy" id="342451"/>
    <lineage>
        <taxon>Bacteria</taxon>
        <taxon>Bacillati</taxon>
        <taxon>Bacillota</taxon>
        <taxon>Bacilli</taxon>
        <taxon>Bacillales</taxon>
        <taxon>Staphylococcaceae</taxon>
        <taxon>Staphylococcus</taxon>
    </lineage>
</organism>
<name>THIG_STAS1</name>
<sequence>MFKIGNFTLNSRLLLGTGKFDNEEIQTQAIAAAETEVLTFAVRRMNLYDKDLPNPLAKVDLSKFITFPNTAGAKTAKEAVRIAEIANHAGVCDMIKVEVIGDDETLLPDPLETYEACKVLLEKGYTVCPYISNDVVLAKRLEELGVHAIMPLASPIGTGRGINNPLNLRYIIERVNVPVIVDAGIGSPKDACHAMELGADGILLNTAISSAADPVKMAEAMNKGISAGRLSYEAGRIPVKYTAQASSPTEGIGFL</sequence>
<accession>Q49UF2</accession>
<feature type="chain" id="PRO_0000236368" description="Thiazole synthase">
    <location>
        <begin position="1"/>
        <end position="255"/>
    </location>
</feature>
<feature type="active site" description="Schiff-base intermediate with DXP" evidence="1">
    <location>
        <position position="96"/>
    </location>
</feature>
<feature type="binding site" evidence="1">
    <location>
        <position position="157"/>
    </location>
    <ligand>
        <name>1-deoxy-D-xylulose 5-phosphate</name>
        <dbReference type="ChEBI" id="CHEBI:57792"/>
    </ligand>
</feature>
<feature type="binding site" evidence="1">
    <location>
        <begin position="183"/>
        <end position="184"/>
    </location>
    <ligand>
        <name>1-deoxy-D-xylulose 5-phosphate</name>
        <dbReference type="ChEBI" id="CHEBI:57792"/>
    </ligand>
</feature>
<feature type="binding site" evidence="1">
    <location>
        <begin position="205"/>
        <end position="206"/>
    </location>
    <ligand>
        <name>1-deoxy-D-xylulose 5-phosphate</name>
        <dbReference type="ChEBI" id="CHEBI:57792"/>
    </ligand>
</feature>
<gene>
    <name evidence="1" type="primary">thiG</name>
    <name type="ordered locus">SSPP133</name>
</gene>
<evidence type="ECO:0000255" key="1">
    <source>
        <dbReference type="HAMAP-Rule" id="MF_00443"/>
    </source>
</evidence>
<comment type="function">
    <text evidence="1">Catalyzes the rearrangement of 1-deoxy-D-xylulose 5-phosphate (DXP) to produce the thiazole phosphate moiety of thiamine. Sulfur is provided by the thiocarboxylate moiety of the carrier protein ThiS. In vitro, sulfur can be provided by H(2)S.</text>
</comment>
<comment type="catalytic activity">
    <reaction evidence="1">
        <text>[ThiS sulfur-carrier protein]-C-terminal-Gly-aminoethanethioate + 2-iminoacetate + 1-deoxy-D-xylulose 5-phosphate = [ThiS sulfur-carrier protein]-C-terminal Gly-Gly + 2-[(2R,5Z)-2-carboxy-4-methylthiazol-5(2H)-ylidene]ethyl phosphate + 2 H2O + H(+)</text>
        <dbReference type="Rhea" id="RHEA:26297"/>
        <dbReference type="Rhea" id="RHEA-COMP:12909"/>
        <dbReference type="Rhea" id="RHEA-COMP:19908"/>
        <dbReference type="ChEBI" id="CHEBI:15377"/>
        <dbReference type="ChEBI" id="CHEBI:15378"/>
        <dbReference type="ChEBI" id="CHEBI:57792"/>
        <dbReference type="ChEBI" id="CHEBI:62899"/>
        <dbReference type="ChEBI" id="CHEBI:77846"/>
        <dbReference type="ChEBI" id="CHEBI:90778"/>
        <dbReference type="ChEBI" id="CHEBI:232372"/>
        <dbReference type="EC" id="2.8.1.10"/>
    </reaction>
</comment>
<comment type="pathway">
    <text evidence="1">Cofactor biosynthesis; thiamine diphosphate biosynthesis.</text>
</comment>
<comment type="subunit">
    <text evidence="1">Homotetramer. Forms heterodimers with either ThiH or ThiS.</text>
</comment>
<comment type="subcellular location">
    <subcellularLocation>
        <location evidence="1">Cytoplasm</location>
    </subcellularLocation>
</comment>
<comment type="similarity">
    <text evidence="1">Belongs to the ThiG family.</text>
</comment>
<keyword id="KW-0963">Cytoplasm</keyword>
<keyword id="KW-0614">Plasmid</keyword>
<keyword id="KW-1185">Reference proteome</keyword>
<keyword id="KW-0704">Schiff base</keyword>
<keyword id="KW-0784">Thiamine biosynthesis</keyword>
<keyword id="KW-0808">Transferase</keyword>
<dbReference type="EC" id="2.8.1.10" evidence="1"/>
<dbReference type="EMBL" id="AP008935">
    <property type="protein sequence ID" value="BAE19624.1"/>
    <property type="molecule type" value="Genomic_DNA"/>
</dbReference>
<dbReference type="RefSeq" id="WP_011304054.1">
    <property type="nucleotide sequence ID" value="NZ_MTGA01000020.1"/>
</dbReference>
<dbReference type="SMR" id="Q49UF2"/>
<dbReference type="KEGG" id="ssp:SSPP133"/>
<dbReference type="PATRIC" id="fig|342451.11.peg.2463"/>
<dbReference type="eggNOG" id="COG2022">
    <property type="taxonomic scope" value="Bacteria"/>
</dbReference>
<dbReference type="HOGENOM" id="CLU_062233_1_0_9"/>
<dbReference type="OrthoDB" id="9805935at2"/>
<dbReference type="UniPathway" id="UPA00060"/>
<dbReference type="Proteomes" id="UP000006371">
    <property type="component" value="Plasmid pSSP1"/>
</dbReference>
<dbReference type="GO" id="GO:0005737">
    <property type="term" value="C:cytoplasm"/>
    <property type="evidence" value="ECO:0007669"/>
    <property type="project" value="UniProtKB-SubCell"/>
</dbReference>
<dbReference type="GO" id="GO:1990107">
    <property type="term" value="F:thiazole synthase activity"/>
    <property type="evidence" value="ECO:0007669"/>
    <property type="project" value="UniProtKB-EC"/>
</dbReference>
<dbReference type="GO" id="GO:0009229">
    <property type="term" value="P:thiamine diphosphate biosynthetic process"/>
    <property type="evidence" value="ECO:0007669"/>
    <property type="project" value="UniProtKB-UniRule"/>
</dbReference>
<dbReference type="CDD" id="cd04728">
    <property type="entry name" value="ThiG"/>
    <property type="match status" value="1"/>
</dbReference>
<dbReference type="Gene3D" id="3.20.20.70">
    <property type="entry name" value="Aldolase class I"/>
    <property type="match status" value="1"/>
</dbReference>
<dbReference type="HAMAP" id="MF_00443">
    <property type="entry name" value="ThiG"/>
    <property type="match status" value="1"/>
</dbReference>
<dbReference type="InterPro" id="IPR013785">
    <property type="entry name" value="Aldolase_TIM"/>
</dbReference>
<dbReference type="InterPro" id="IPR033983">
    <property type="entry name" value="Thiazole_synthase_ThiG"/>
</dbReference>
<dbReference type="InterPro" id="IPR008867">
    <property type="entry name" value="ThiG"/>
</dbReference>
<dbReference type="PANTHER" id="PTHR34266">
    <property type="entry name" value="THIAZOLE SYNTHASE"/>
    <property type="match status" value="1"/>
</dbReference>
<dbReference type="PANTHER" id="PTHR34266:SF2">
    <property type="entry name" value="THIAZOLE SYNTHASE"/>
    <property type="match status" value="1"/>
</dbReference>
<dbReference type="Pfam" id="PF05690">
    <property type="entry name" value="ThiG"/>
    <property type="match status" value="1"/>
</dbReference>
<dbReference type="SUPFAM" id="SSF110399">
    <property type="entry name" value="ThiG-like"/>
    <property type="match status" value="1"/>
</dbReference>